<keyword id="KW-0067">ATP-binding</keyword>
<keyword id="KW-0436">Ligase</keyword>
<keyword id="KW-0547">Nucleotide-binding</keyword>
<keyword id="KW-0658">Purine biosynthesis</keyword>
<keyword id="KW-1185">Reference proteome</keyword>
<dbReference type="EC" id="6.3.2.6" evidence="1"/>
<dbReference type="EMBL" id="CP000725">
    <property type="protein sequence ID" value="ABV10503.1"/>
    <property type="molecule type" value="Genomic_DNA"/>
</dbReference>
<dbReference type="RefSeq" id="WP_011999586.1">
    <property type="nucleotide sequence ID" value="NC_009785.1"/>
</dbReference>
<dbReference type="SMR" id="A8AU96"/>
<dbReference type="STRING" id="467705.SGO_0034"/>
<dbReference type="KEGG" id="sgo:SGO_0034"/>
<dbReference type="eggNOG" id="COG0152">
    <property type="taxonomic scope" value="Bacteria"/>
</dbReference>
<dbReference type="HOGENOM" id="CLU_061495_2_0_9"/>
<dbReference type="UniPathway" id="UPA00074">
    <property type="reaction ID" value="UER00131"/>
</dbReference>
<dbReference type="Proteomes" id="UP000001131">
    <property type="component" value="Chromosome"/>
</dbReference>
<dbReference type="GO" id="GO:0005524">
    <property type="term" value="F:ATP binding"/>
    <property type="evidence" value="ECO:0007669"/>
    <property type="project" value="UniProtKB-KW"/>
</dbReference>
<dbReference type="GO" id="GO:0004639">
    <property type="term" value="F:phosphoribosylaminoimidazolesuccinocarboxamide synthase activity"/>
    <property type="evidence" value="ECO:0007669"/>
    <property type="project" value="UniProtKB-UniRule"/>
</dbReference>
<dbReference type="GO" id="GO:0006189">
    <property type="term" value="P:'de novo' IMP biosynthetic process"/>
    <property type="evidence" value="ECO:0007669"/>
    <property type="project" value="UniProtKB-UniRule"/>
</dbReference>
<dbReference type="GO" id="GO:0009236">
    <property type="term" value="P:cobalamin biosynthetic process"/>
    <property type="evidence" value="ECO:0007669"/>
    <property type="project" value="InterPro"/>
</dbReference>
<dbReference type="CDD" id="cd01415">
    <property type="entry name" value="SAICAR_synt_PurC"/>
    <property type="match status" value="1"/>
</dbReference>
<dbReference type="FunFam" id="3.30.200.20:FF:000189">
    <property type="entry name" value="Phosphoribosylaminoimidazole-succinocarboxamide synthase"/>
    <property type="match status" value="1"/>
</dbReference>
<dbReference type="FunFam" id="3.30.470.20:FF:000006">
    <property type="entry name" value="Phosphoribosylaminoimidazole-succinocarboxamide synthase"/>
    <property type="match status" value="1"/>
</dbReference>
<dbReference type="Gene3D" id="3.30.470.20">
    <property type="entry name" value="ATP-grasp fold, B domain"/>
    <property type="match status" value="1"/>
</dbReference>
<dbReference type="Gene3D" id="3.30.200.20">
    <property type="entry name" value="Phosphorylase Kinase, domain 1"/>
    <property type="match status" value="1"/>
</dbReference>
<dbReference type="HAMAP" id="MF_00137">
    <property type="entry name" value="SAICAR_synth"/>
    <property type="match status" value="1"/>
</dbReference>
<dbReference type="InterPro" id="IPR028923">
    <property type="entry name" value="SAICAR_synt/ADE2_N"/>
</dbReference>
<dbReference type="InterPro" id="IPR033934">
    <property type="entry name" value="SAICAR_synt_PurC"/>
</dbReference>
<dbReference type="InterPro" id="IPR001636">
    <property type="entry name" value="SAICAR_synth"/>
</dbReference>
<dbReference type="InterPro" id="IPR050089">
    <property type="entry name" value="SAICAR_synthetase"/>
</dbReference>
<dbReference type="InterPro" id="IPR018236">
    <property type="entry name" value="SAICAR_synthetase_CS"/>
</dbReference>
<dbReference type="NCBIfam" id="TIGR00081">
    <property type="entry name" value="purC"/>
    <property type="match status" value="1"/>
</dbReference>
<dbReference type="PANTHER" id="PTHR43599">
    <property type="entry name" value="MULTIFUNCTIONAL PROTEIN ADE2"/>
    <property type="match status" value="1"/>
</dbReference>
<dbReference type="PANTHER" id="PTHR43599:SF3">
    <property type="entry name" value="SI:DKEY-6E2.2"/>
    <property type="match status" value="1"/>
</dbReference>
<dbReference type="Pfam" id="PF01259">
    <property type="entry name" value="SAICAR_synt"/>
    <property type="match status" value="1"/>
</dbReference>
<dbReference type="SUPFAM" id="SSF56104">
    <property type="entry name" value="SAICAR synthase-like"/>
    <property type="match status" value="1"/>
</dbReference>
<dbReference type="PROSITE" id="PS01057">
    <property type="entry name" value="SAICAR_SYNTHETASE_1"/>
    <property type="match status" value="1"/>
</dbReference>
<dbReference type="PROSITE" id="PS01058">
    <property type="entry name" value="SAICAR_SYNTHETASE_2"/>
    <property type="match status" value="1"/>
</dbReference>
<evidence type="ECO:0000255" key="1">
    <source>
        <dbReference type="HAMAP-Rule" id="MF_00137"/>
    </source>
</evidence>
<comment type="catalytic activity">
    <reaction evidence="1">
        <text>5-amino-1-(5-phospho-D-ribosyl)imidazole-4-carboxylate + L-aspartate + ATP = (2S)-2-[5-amino-1-(5-phospho-beta-D-ribosyl)imidazole-4-carboxamido]succinate + ADP + phosphate + 2 H(+)</text>
        <dbReference type="Rhea" id="RHEA:22628"/>
        <dbReference type="ChEBI" id="CHEBI:15378"/>
        <dbReference type="ChEBI" id="CHEBI:29991"/>
        <dbReference type="ChEBI" id="CHEBI:30616"/>
        <dbReference type="ChEBI" id="CHEBI:43474"/>
        <dbReference type="ChEBI" id="CHEBI:58443"/>
        <dbReference type="ChEBI" id="CHEBI:77657"/>
        <dbReference type="ChEBI" id="CHEBI:456216"/>
        <dbReference type="EC" id="6.3.2.6"/>
    </reaction>
</comment>
<comment type="pathway">
    <text evidence="1">Purine metabolism; IMP biosynthesis via de novo pathway; 5-amino-1-(5-phospho-D-ribosyl)imidazole-4-carboxamide from 5-amino-1-(5-phospho-D-ribosyl)imidazole-4-carboxylate: step 1/2.</text>
</comment>
<comment type="similarity">
    <text evidence="1">Belongs to the SAICAR synthetase family.</text>
</comment>
<proteinExistence type="inferred from homology"/>
<gene>
    <name evidence="1" type="primary">purC</name>
    <name type="ordered locus">SGO_0034</name>
</gene>
<name>PUR7_STRGC</name>
<organism>
    <name type="scientific">Streptococcus gordonii (strain Challis / ATCC 35105 / BCRC 15272 / CH1 / DL1 / V288)</name>
    <dbReference type="NCBI Taxonomy" id="467705"/>
    <lineage>
        <taxon>Bacteria</taxon>
        <taxon>Bacillati</taxon>
        <taxon>Bacillota</taxon>
        <taxon>Bacilli</taxon>
        <taxon>Lactobacillales</taxon>
        <taxon>Streptococcaceae</taxon>
        <taxon>Streptococcus</taxon>
    </lineage>
</organism>
<protein>
    <recommendedName>
        <fullName evidence="1">Phosphoribosylaminoimidazole-succinocarboxamide synthase</fullName>
        <ecNumber evidence="1">6.3.2.6</ecNumber>
    </recommendedName>
    <alternativeName>
        <fullName evidence="1">SAICAR synthetase</fullName>
    </alternativeName>
</protein>
<reference key="1">
    <citation type="journal article" date="2007" name="J. Bacteriol.">
        <title>Genome-wide transcriptional changes in Streptococcus gordonii in response to competence signaling peptide.</title>
        <authorList>
            <person name="Vickerman M.M."/>
            <person name="Iobst S."/>
            <person name="Jesionowski A.M."/>
            <person name="Gill S.R."/>
        </authorList>
    </citation>
    <scope>NUCLEOTIDE SEQUENCE [LARGE SCALE GENOMIC DNA]</scope>
    <source>
        <strain>Challis / ATCC 35105 / BCRC 15272 / CH1 / DL1 / V288</strain>
    </source>
</reference>
<accession>A8AU96</accession>
<feature type="chain" id="PRO_1000076471" description="Phosphoribosylaminoimidazole-succinocarboxamide synthase">
    <location>
        <begin position="1"/>
        <end position="235"/>
    </location>
</feature>
<sequence>MSNKLIYSGKAKDILATDDEDVIVAHYKDQATAFNGVKKEQIVGKGVLNNQISSFIFEKLNAAGVATHFIEKISDTDQLNKKVKIIPLEVVLRNYTAGSFSKRFGVEEGIALETPIVEFYYKNDDLDDPFINDEHVKFLKIANDEEIAFLKEETRRINKLLSDWFHQIGLKLIDFKLEFGFDKEGKIILADEFSPDNCRLWDAEGHHMDKDVFRRGLGELTDVYQVVWEKLQAIK</sequence>